<accession>P51121</accession>
<gene>
    <name evidence="2" type="primary">glul</name>
</gene>
<protein>
    <recommendedName>
        <fullName evidence="6">Glutamine synthetase</fullName>
        <shortName evidence="6">GS</shortName>
        <ecNumber evidence="2">6.3.1.2</ecNumber>
    </recommendedName>
    <alternativeName>
        <fullName evidence="7">Glutamate--ammonia ligase</fullName>
    </alternativeName>
</protein>
<feature type="chain" id="PRO_0000153146" description="Glutamine synthetase">
    <location>
        <begin position="1"/>
        <end position="392"/>
    </location>
</feature>
<feature type="domain" description="GS beta-grasp" evidence="4">
    <location>
        <begin position="26"/>
        <end position="106"/>
    </location>
</feature>
<feature type="domain" description="GS catalytic" evidence="5">
    <location>
        <begin position="113"/>
        <end position="392"/>
    </location>
</feature>
<feature type="binding site" evidence="2">
    <location>
        <position position="134"/>
    </location>
    <ligand>
        <name>ATP</name>
        <dbReference type="ChEBI" id="CHEBI:30616"/>
    </ligand>
</feature>
<feature type="binding site" evidence="2">
    <location>
        <position position="134"/>
    </location>
    <ligand>
        <name>Mn(2+)</name>
        <dbReference type="ChEBI" id="CHEBI:29035"/>
        <label>1</label>
    </ligand>
</feature>
<feature type="binding site" evidence="2">
    <location>
        <position position="136"/>
    </location>
    <ligand>
        <name>Mn(2+)</name>
        <dbReference type="ChEBI" id="CHEBI:29035"/>
        <label>2</label>
    </ligand>
</feature>
<feature type="binding site" evidence="2">
    <location>
        <position position="196"/>
    </location>
    <ligand>
        <name>Mn(2+)</name>
        <dbReference type="ChEBI" id="CHEBI:29035"/>
        <label>2</label>
    </ligand>
</feature>
<feature type="binding site" evidence="2">
    <location>
        <begin position="203"/>
        <end position="208"/>
    </location>
    <ligand>
        <name>ATP</name>
        <dbReference type="ChEBI" id="CHEBI:30616"/>
    </ligand>
</feature>
<feature type="binding site" evidence="2">
    <location>
        <position position="203"/>
    </location>
    <ligand>
        <name>Mn(2+)</name>
        <dbReference type="ChEBI" id="CHEBI:29035"/>
        <label>2</label>
    </ligand>
</feature>
<feature type="binding site" evidence="3">
    <location>
        <begin position="246"/>
        <end position="247"/>
    </location>
    <ligand>
        <name>L-glutamate</name>
        <dbReference type="ChEBI" id="CHEBI:29985"/>
    </ligand>
</feature>
<feature type="binding site" evidence="2">
    <location>
        <position position="253"/>
    </location>
    <ligand>
        <name>Mn(2+)</name>
        <dbReference type="ChEBI" id="CHEBI:29035"/>
        <label>1</label>
    </ligand>
</feature>
<feature type="binding site" evidence="2">
    <location>
        <begin position="255"/>
        <end position="257"/>
    </location>
    <ligand>
        <name>ATP</name>
        <dbReference type="ChEBI" id="CHEBI:30616"/>
    </ligand>
</feature>
<feature type="binding site" evidence="2">
    <location>
        <position position="319"/>
    </location>
    <ligand>
        <name>ATP</name>
        <dbReference type="ChEBI" id="CHEBI:30616"/>
    </ligand>
</feature>
<feature type="binding site" evidence="3">
    <location>
        <position position="319"/>
    </location>
    <ligand>
        <name>L-glutamate</name>
        <dbReference type="ChEBI" id="CHEBI:29985"/>
    </ligand>
</feature>
<feature type="binding site" evidence="2">
    <location>
        <position position="324"/>
    </location>
    <ligand>
        <name>ATP</name>
        <dbReference type="ChEBI" id="CHEBI:30616"/>
    </ligand>
</feature>
<feature type="binding site" evidence="2">
    <location>
        <begin position="336"/>
        <end position="338"/>
    </location>
    <ligand>
        <name>ADP</name>
        <dbReference type="ChEBI" id="CHEBI:456216"/>
    </ligand>
</feature>
<feature type="binding site" evidence="2">
    <location>
        <position position="338"/>
    </location>
    <ligand>
        <name>Mn(2+)</name>
        <dbReference type="ChEBI" id="CHEBI:29035"/>
        <label>1</label>
    </ligand>
</feature>
<feature type="binding site" evidence="3">
    <location>
        <position position="340"/>
    </location>
    <ligand>
        <name>L-glutamate</name>
        <dbReference type="ChEBI" id="CHEBI:29985"/>
    </ligand>
</feature>
<organism>
    <name type="scientific">Xenopus laevis</name>
    <name type="common">African clawed frog</name>
    <dbReference type="NCBI Taxonomy" id="8355"/>
    <lineage>
        <taxon>Eukaryota</taxon>
        <taxon>Metazoa</taxon>
        <taxon>Chordata</taxon>
        <taxon>Craniata</taxon>
        <taxon>Vertebrata</taxon>
        <taxon>Euteleostomi</taxon>
        <taxon>Amphibia</taxon>
        <taxon>Batrachia</taxon>
        <taxon>Anura</taxon>
        <taxon>Pipoidea</taxon>
        <taxon>Pipidae</taxon>
        <taxon>Xenopodinae</taxon>
        <taxon>Xenopus</taxon>
        <taxon>Xenopus</taxon>
    </lineage>
</organism>
<name>GLNA_XENLA</name>
<proteinExistence type="evidence at transcript level"/>
<evidence type="ECO:0000250" key="1">
    <source>
        <dbReference type="UniProtKB" id="P09606"/>
    </source>
</evidence>
<evidence type="ECO:0000250" key="2">
    <source>
        <dbReference type="UniProtKB" id="P15104"/>
    </source>
</evidence>
<evidence type="ECO:0000250" key="3">
    <source>
        <dbReference type="UniProtKB" id="P9WN39"/>
    </source>
</evidence>
<evidence type="ECO:0000255" key="4">
    <source>
        <dbReference type="PROSITE-ProRule" id="PRU01330"/>
    </source>
</evidence>
<evidence type="ECO:0000255" key="5">
    <source>
        <dbReference type="PROSITE-ProRule" id="PRU01331"/>
    </source>
</evidence>
<evidence type="ECO:0000303" key="6">
    <source>
    </source>
</evidence>
<evidence type="ECO:0000305" key="7"/>
<reference key="1">
    <citation type="journal article" date="1995" name="FEBS Lett.">
        <title>Identification of a Xenopus glutamine synthetase gene abundantly expressed in the embryonic nervous system but not in adult brain.</title>
        <authorList>
            <person name="Hatada S."/>
            <person name="Kinoshita M."/>
            <person name="Noda M."/>
            <person name="Asashima M."/>
        </authorList>
    </citation>
    <scope>NUCLEOTIDE SEQUENCE [MRNA]</scope>
</reference>
<comment type="function">
    <text evidence="2">Glutamine synthetase that catalyzes the ATP-dependent conversion of glutamate and ammonia to glutamine.</text>
</comment>
<comment type="catalytic activity">
    <reaction evidence="2">
        <text>L-glutamate + NH4(+) + ATP = L-glutamine + ADP + phosphate + H(+)</text>
        <dbReference type="Rhea" id="RHEA:16169"/>
        <dbReference type="ChEBI" id="CHEBI:15378"/>
        <dbReference type="ChEBI" id="CHEBI:28938"/>
        <dbReference type="ChEBI" id="CHEBI:29985"/>
        <dbReference type="ChEBI" id="CHEBI:30616"/>
        <dbReference type="ChEBI" id="CHEBI:43474"/>
        <dbReference type="ChEBI" id="CHEBI:58359"/>
        <dbReference type="ChEBI" id="CHEBI:456216"/>
        <dbReference type="EC" id="6.3.1.2"/>
    </reaction>
</comment>
<comment type="cofactor">
    <cofactor evidence="1">
        <name>Mg(2+)</name>
        <dbReference type="ChEBI" id="CHEBI:18420"/>
    </cofactor>
    <cofactor evidence="2">
        <name>Mn(2+)</name>
        <dbReference type="ChEBI" id="CHEBI:29035"/>
    </cofactor>
</comment>
<comment type="subcellular location">
    <subcellularLocation>
        <location evidence="2">Cytoplasm</location>
        <location evidence="2">Cytosol</location>
    </subcellularLocation>
    <subcellularLocation>
        <location evidence="1">Microsome</location>
    </subcellularLocation>
    <subcellularLocation>
        <location evidence="1">Mitochondrion</location>
    </subcellularLocation>
</comment>
<comment type="similarity">
    <text evidence="7">Belongs to the glutamine synthetase family.</text>
</comment>
<dbReference type="EC" id="6.3.1.2" evidence="2"/>
<dbReference type="EMBL" id="D50062">
    <property type="protein sequence ID" value="BAA08779.1"/>
    <property type="molecule type" value="mRNA"/>
</dbReference>
<dbReference type="PIR" id="I51422">
    <property type="entry name" value="I51422"/>
</dbReference>
<dbReference type="RefSeq" id="NP_001082548.1">
    <property type="nucleotide sequence ID" value="NM_001089079.1"/>
</dbReference>
<dbReference type="SMR" id="P51121"/>
<dbReference type="GeneID" id="398556"/>
<dbReference type="KEGG" id="xla:398556"/>
<dbReference type="AGR" id="Xenbase:XB-GENE-6256042"/>
<dbReference type="CTD" id="398556"/>
<dbReference type="Xenbase" id="XB-GENE-6256042">
    <property type="gene designation" value="glul.L"/>
</dbReference>
<dbReference type="OMA" id="TKDYADH"/>
<dbReference type="OrthoDB" id="1936100at2759"/>
<dbReference type="Proteomes" id="UP000186698">
    <property type="component" value="Chromosome 8L"/>
</dbReference>
<dbReference type="Bgee" id="398556">
    <property type="expression patterns" value="Expressed in egg cell and 19 other cell types or tissues"/>
</dbReference>
<dbReference type="GO" id="GO:0005737">
    <property type="term" value="C:cytoplasm"/>
    <property type="evidence" value="ECO:0000318"/>
    <property type="project" value="GO_Central"/>
</dbReference>
<dbReference type="GO" id="GO:0005829">
    <property type="term" value="C:cytosol"/>
    <property type="evidence" value="ECO:0007669"/>
    <property type="project" value="UniProtKB-SubCell"/>
</dbReference>
<dbReference type="GO" id="GO:0005783">
    <property type="term" value="C:endoplasmic reticulum"/>
    <property type="evidence" value="ECO:0007669"/>
    <property type="project" value="UniProtKB-KW"/>
</dbReference>
<dbReference type="GO" id="GO:0005739">
    <property type="term" value="C:mitochondrion"/>
    <property type="evidence" value="ECO:0007669"/>
    <property type="project" value="UniProtKB-SubCell"/>
</dbReference>
<dbReference type="GO" id="GO:0005524">
    <property type="term" value="F:ATP binding"/>
    <property type="evidence" value="ECO:0007669"/>
    <property type="project" value="UniProtKB-KW"/>
</dbReference>
<dbReference type="GO" id="GO:0004356">
    <property type="term" value="F:glutamine synthetase activity"/>
    <property type="evidence" value="ECO:0000318"/>
    <property type="project" value="GO_Central"/>
</dbReference>
<dbReference type="GO" id="GO:0046872">
    <property type="term" value="F:metal ion binding"/>
    <property type="evidence" value="ECO:0007669"/>
    <property type="project" value="UniProtKB-KW"/>
</dbReference>
<dbReference type="GO" id="GO:0006542">
    <property type="term" value="P:glutamine biosynthetic process"/>
    <property type="evidence" value="ECO:0000318"/>
    <property type="project" value="GO_Central"/>
</dbReference>
<dbReference type="FunFam" id="3.10.20.70:FF:000004">
    <property type="entry name" value="Glutamine synthetase"/>
    <property type="match status" value="1"/>
</dbReference>
<dbReference type="FunFam" id="3.30.590.10:FF:000011">
    <property type="entry name" value="Glutamine synthetase"/>
    <property type="match status" value="1"/>
</dbReference>
<dbReference type="Gene3D" id="3.10.20.70">
    <property type="entry name" value="Glutamine synthetase, N-terminal domain"/>
    <property type="match status" value="1"/>
</dbReference>
<dbReference type="Gene3D" id="3.30.590.10">
    <property type="entry name" value="Glutamine synthetase/guanido kinase, catalytic domain"/>
    <property type="match status" value="1"/>
</dbReference>
<dbReference type="InterPro" id="IPR008147">
    <property type="entry name" value="Gln_synt_N"/>
</dbReference>
<dbReference type="InterPro" id="IPR036651">
    <property type="entry name" value="Gln_synt_N_sf"/>
</dbReference>
<dbReference type="InterPro" id="IPR014746">
    <property type="entry name" value="Gln_synth/guanido_kin_cat_dom"/>
</dbReference>
<dbReference type="InterPro" id="IPR008146">
    <property type="entry name" value="Gln_synth_cat_dom"/>
</dbReference>
<dbReference type="InterPro" id="IPR027303">
    <property type="entry name" value="Gln_synth_gly_rich_site"/>
</dbReference>
<dbReference type="InterPro" id="IPR027302">
    <property type="entry name" value="Gln_synth_N_conserv_site"/>
</dbReference>
<dbReference type="InterPro" id="IPR050292">
    <property type="entry name" value="Glutamine_Synthetase"/>
</dbReference>
<dbReference type="PANTHER" id="PTHR20852">
    <property type="entry name" value="GLUTAMINE SYNTHETASE"/>
    <property type="match status" value="1"/>
</dbReference>
<dbReference type="PANTHER" id="PTHR20852:SF43">
    <property type="entry name" value="GLUTAMINE SYNTHETASE"/>
    <property type="match status" value="1"/>
</dbReference>
<dbReference type="Pfam" id="PF00120">
    <property type="entry name" value="Gln-synt_C"/>
    <property type="match status" value="1"/>
</dbReference>
<dbReference type="Pfam" id="PF03951">
    <property type="entry name" value="Gln-synt_N"/>
    <property type="match status" value="1"/>
</dbReference>
<dbReference type="SMART" id="SM01230">
    <property type="entry name" value="Gln-synt_C"/>
    <property type="match status" value="1"/>
</dbReference>
<dbReference type="SUPFAM" id="SSF54368">
    <property type="entry name" value="Glutamine synthetase, N-terminal domain"/>
    <property type="match status" value="1"/>
</dbReference>
<dbReference type="SUPFAM" id="SSF55931">
    <property type="entry name" value="Glutamine synthetase/guanido kinase"/>
    <property type="match status" value="1"/>
</dbReference>
<dbReference type="PROSITE" id="PS00180">
    <property type="entry name" value="GLNA_1"/>
    <property type="match status" value="1"/>
</dbReference>
<dbReference type="PROSITE" id="PS00181">
    <property type="entry name" value="GLNA_ATP"/>
    <property type="match status" value="1"/>
</dbReference>
<dbReference type="PROSITE" id="PS51986">
    <property type="entry name" value="GS_BETA_GRASP"/>
    <property type="match status" value="1"/>
</dbReference>
<dbReference type="PROSITE" id="PS51987">
    <property type="entry name" value="GS_CATALYTIC"/>
    <property type="match status" value="1"/>
</dbReference>
<keyword id="KW-0067">ATP-binding</keyword>
<keyword id="KW-0963">Cytoplasm</keyword>
<keyword id="KW-0256">Endoplasmic reticulum</keyword>
<keyword id="KW-0436">Ligase</keyword>
<keyword id="KW-0460">Magnesium</keyword>
<keyword id="KW-0464">Manganese</keyword>
<keyword id="KW-0479">Metal-binding</keyword>
<keyword id="KW-0492">Microsome</keyword>
<keyword id="KW-0496">Mitochondrion</keyword>
<keyword id="KW-0547">Nucleotide-binding</keyword>
<keyword id="KW-1185">Reference proteome</keyword>
<sequence length="392" mass="43985">MSVSHSSRLNKGVREQYMKLPQGEKVQVTYVWIDGTGEGVRCKTRTLDQEPKTIDEIPEWNFDGSSTHQAEGSNSDMYLIPVQMFRDPFCLDPNKLVMCEVLKYNRKSAETNLRHTCKKIMEMVNDHRPWFGMEQEYTLLGINGHPYGWPENGFPGPQGPYYCGVGADKVYGRDVVESHYKACLYAGIKICGTNAEVMPSQWEFQVGPCEGIDMGDHLWMARFILHRVCEDFGVVATLDPKPMTGNWNGAGCHTNYSTESMRVEGGLKHIEDAIEKLGKRHDYHICVYDPRGGKDNSRRLTGQHETSSIHEFSAGVANRGASIRIPRQVGQEGYGYFEDRRPAANCDPYAVTEALVRTTILNETGSETKDYKNGAGFSRAIGMASPRDAAVF</sequence>